<dbReference type="EC" id="1.3.3.3" evidence="1"/>
<dbReference type="EMBL" id="CP001025">
    <property type="protein sequence ID" value="ACB64692.1"/>
    <property type="molecule type" value="Genomic_DNA"/>
</dbReference>
<dbReference type="RefSeq" id="WP_012364346.1">
    <property type="nucleotide sequence ID" value="NC_010551.1"/>
</dbReference>
<dbReference type="SMR" id="B1YU52"/>
<dbReference type="KEGG" id="bac:BamMC406_2213"/>
<dbReference type="HOGENOM" id="CLU_026169_0_1_4"/>
<dbReference type="OrthoDB" id="9777553at2"/>
<dbReference type="UniPathway" id="UPA00251">
    <property type="reaction ID" value="UER00322"/>
</dbReference>
<dbReference type="Proteomes" id="UP000001680">
    <property type="component" value="Chromosome 1"/>
</dbReference>
<dbReference type="GO" id="GO:0005737">
    <property type="term" value="C:cytoplasm"/>
    <property type="evidence" value="ECO:0007669"/>
    <property type="project" value="UniProtKB-SubCell"/>
</dbReference>
<dbReference type="GO" id="GO:0004109">
    <property type="term" value="F:coproporphyrinogen oxidase activity"/>
    <property type="evidence" value="ECO:0007669"/>
    <property type="project" value="UniProtKB-UniRule"/>
</dbReference>
<dbReference type="GO" id="GO:0046872">
    <property type="term" value="F:metal ion binding"/>
    <property type="evidence" value="ECO:0007669"/>
    <property type="project" value="UniProtKB-KW"/>
</dbReference>
<dbReference type="GO" id="GO:0042803">
    <property type="term" value="F:protein homodimerization activity"/>
    <property type="evidence" value="ECO:0000250"/>
    <property type="project" value="UniProtKB"/>
</dbReference>
<dbReference type="GO" id="GO:0006782">
    <property type="term" value="P:protoporphyrinogen IX biosynthetic process"/>
    <property type="evidence" value="ECO:0007669"/>
    <property type="project" value="UniProtKB-UniRule"/>
</dbReference>
<dbReference type="FunFam" id="3.40.1500.10:FF:000001">
    <property type="entry name" value="Oxygen-dependent coproporphyrinogen-III oxidase"/>
    <property type="match status" value="1"/>
</dbReference>
<dbReference type="Gene3D" id="3.40.1500.10">
    <property type="entry name" value="Coproporphyrinogen III oxidase, aerobic"/>
    <property type="match status" value="1"/>
</dbReference>
<dbReference type="HAMAP" id="MF_00333">
    <property type="entry name" value="Coprogen_oxidas"/>
    <property type="match status" value="1"/>
</dbReference>
<dbReference type="InterPro" id="IPR001260">
    <property type="entry name" value="Coprogen_oxidase_aer"/>
</dbReference>
<dbReference type="InterPro" id="IPR036406">
    <property type="entry name" value="Coprogen_oxidase_aer_sf"/>
</dbReference>
<dbReference type="InterPro" id="IPR018375">
    <property type="entry name" value="Coprogen_oxidase_CS"/>
</dbReference>
<dbReference type="NCBIfam" id="NF003727">
    <property type="entry name" value="PRK05330.1"/>
    <property type="match status" value="1"/>
</dbReference>
<dbReference type="PANTHER" id="PTHR10755">
    <property type="entry name" value="COPROPORPHYRINOGEN III OXIDASE, MITOCHONDRIAL"/>
    <property type="match status" value="1"/>
</dbReference>
<dbReference type="PANTHER" id="PTHR10755:SF0">
    <property type="entry name" value="OXYGEN-DEPENDENT COPROPORPHYRINOGEN-III OXIDASE, MITOCHONDRIAL"/>
    <property type="match status" value="1"/>
</dbReference>
<dbReference type="Pfam" id="PF01218">
    <property type="entry name" value="Coprogen_oxidas"/>
    <property type="match status" value="1"/>
</dbReference>
<dbReference type="PIRSF" id="PIRSF000166">
    <property type="entry name" value="Coproporphyri_ox"/>
    <property type="match status" value="1"/>
</dbReference>
<dbReference type="PRINTS" id="PR00073">
    <property type="entry name" value="COPRGNOXDASE"/>
</dbReference>
<dbReference type="SUPFAM" id="SSF102886">
    <property type="entry name" value="Coproporphyrinogen III oxidase"/>
    <property type="match status" value="1"/>
</dbReference>
<dbReference type="PROSITE" id="PS01021">
    <property type="entry name" value="COPROGEN_OXIDASE"/>
    <property type="match status" value="1"/>
</dbReference>
<sequence length="306" mass="34519">MTDSTYDVPRVRTYLQGLQTRIADALGALDGTPLATDVWQRGPEERLRGGGCTRILEGGRVFERAGIGFSDVAGDALPPSASAARPQLAGRGFEALGVSLVLHPRNPYCPTVHMNVRMLIATKPGEAPIFWFGGGMDLTPVYPFEDDARHFHQVCKDALDPFGAELYPRFKTWCDEYFFLKHRNETRGIGGIFFDDFSEPGFERSFEMMQSVGDAFLNAYLPIVERRAALPYGERERDFQAYRRGRYVEFNLVFDRGTLFGLQSGGRTESILMSMPPVANWRYNWQPEPGSPEARLSEFLVPRDWV</sequence>
<proteinExistence type="inferred from homology"/>
<reference key="1">
    <citation type="submission" date="2008-04" db="EMBL/GenBank/DDBJ databases">
        <title>Complete sequence of chromosome 1 of Burkholderia ambifaria MC40-6.</title>
        <authorList>
            <person name="Copeland A."/>
            <person name="Lucas S."/>
            <person name="Lapidus A."/>
            <person name="Glavina del Rio T."/>
            <person name="Dalin E."/>
            <person name="Tice H."/>
            <person name="Pitluck S."/>
            <person name="Chain P."/>
            <person name="Malfatti S."/>
            <person name="Shin M."/>
            <person name="Vergez L."/>
            <person name="Lang D."/>
            <person name="Schmutz J."/>
            <person name="Larimer F."/>
            <person name="Land M."/>
            <person name="Hauser L."/>
            <person name="Kyrpides N."/>
            <person name="Lykidis A."/>
            <person name="Ramette A."/>
            <person name="Konstantinidis K."/>
            <person name="Tiedje J."/>
            <person name="Richardson P."/>
        </authorList>
    </citation>
    <scope>NUCLEOTIDE SEQUENCE [LARGE SCALE GENOMIC DNA]</scope>
    <source>
        <strain>MC40-6</strain>
    </source>
</reference>
<accession>B1YU52</accession>
<protein>
    <recommendedName>
        <fullName evidence="1">Oxygen-dependent coproporphyrinogen-III oxidase</fullName>
        <shortName evidence="1">CPO</shortName>
        <shortName evidence="1">Coprogen oxidase</shortName>
        <shortName evidence="1">Coproporphyrinogenase</shortName>
        <ecNumber evidence="1">1.3.3.3</ecNumber>
    </recommendedName>
</protein>
<name>HEM6_BURA4</name>
<feature type="chain" id="PRO_1000119790" description="Oxygen-dependent coproporphyrinogen-III oxidase">
    <location>
        <begin position="1"/>
        <end position="306"/>
    </location>
</feature>
<feature type="region of interest" description="Important for dimerization" evidence="1">
    <location>
        <begin position="247"/>
        <end position="282"/>
    </location>
</feature>
<feature type="active site" description="Proton donor" evidence="1">
    <location>
        <position position="113"/>
    </location>
</feature>
<feature type="binding site" evidence="1">
    <location>
        <position position="99"/>
    </location>
    <ligand>
        <name>substrate</name>
    </ligand>
</feature>
<feature type="binding site" evidence="1">
    <location>
        <position position="103"/>
    </location>
    <ligand>
        <name>a divalent metal cation</name>
        <dbReference type="ChEBI" id="CHEBI:60240"/>
    </ligand>
</feature>
<feature type="binding site" evidence="1">
    <location>
        <position position="113"/>
    </location>
    <ligand>
        <name>a divalent metal cation</name>
        <dbReference type="ChEBI" id="CHEBI:60240"/>
    </ligand>
</feature>
<feature type="binding site" evidence="1">
    <location>
        <begin position="115"/>
        <end position="117"/>
    </location>
    <ligand>
        <name>substrate</name>
    </ligand>
</feature>
<feature type="binding site" evidence="1">
    <location>
        <position position="152"/>
    </location>
    <ligand>
        <name>a divalent metal cation</name>
        <dbReference type="ChEBI" id="CHEBI:60240"/>
    </ligand>
</feature>
<feature type="binding site" evidence="1">
    <location>
        <position position="182"/>
    </location>
    <ligand>
        <name>a divalent metal cation</name>
        <dbReference type="ChEBI" id="CHEBI:60240"/>
    </ligand>
</feature>
<feature type="binding site" evidence="1">
    <location>
        <begin position="265"/>
        <end position="267"/>
    </location>
    <ligand>
        <name>substrate</name>
    </ligand>
</feature>
<feature type="site" description="Important for dimerization" evidence="1">
    <location>
        <position position="182"/>
    </location>
</feature>
<organism>
    <name type="scientific">Burkholderia ambifaria (strain MC40-6)</name>
    <dbReference type="NCBI Taxonomy" id="398577"/>
    <lineage>
        <taxon>Bacteria</taxon>
        <taxon>Pseudomonadati</taxon>
        <taxon>Pseudomonadota</taxon>
        <taxon>Betaproteobacteria</taxon>
        <taxon>Burkholderiales</taxon>
        <taxon>Burkholderiaceae</taxon>
        <taxon>Burkholderia</taxon>
        <taxon>Burkholderia cepacia complex</taxon>
    </lineage>
</organism>
<evidence type="ECO:0000255" key="1">
    <source>
        <dbReference type="HAMAP-Rule" id="MF_00333"/>
    </source>
</evidence>
<gene>
    <name evidence="1" type="primary">hemF</name>
    <name type="ordered locus">BamMC406_2213</name>
</gene>
<comment type="function">
    <text evidence="1">Involved in the heme biosynthesis. Catalyzes the aerobic oxidative decarboxylation of propionate groups of rings A and B of coproporphyrinogen-III to yield the vinyl groups in protoporphyrinogen-IX.</text>
</comment>
<comment type="catalytic activity">
    <reaction evidence="1">
        <text>coproporphyrinogen III + O2 + 2 H(+) = protoporphyrinogen IX + 2 CO2 + 2 H2O</text>
        <dbReference type="Rhea" id="RHEA:18257"/>
        <dbReference type="ChEBI" id="CHEBI:15377"/>
        <dbReference type="ChEBI" id="CHEBI:15378"/>
        <dbReference type="ChEBI" id="CHEBI:15379"/>
        <dbReference type="ChEBI" id="CHEBI:16526"/>
        <dbReference type="ChEBI" id="CHEBI:57307"/>
        <dbReference type="ChEBI" id="CHEBI:57309"/>
        <dbReference type="EC" id="1.3.3.3"/>
    </reaction>
</comment>
<comment type="cofactor">
    <cofactor evidence="1">
        <name>a divalent metal cation</name>
        <dbReference type="ChEBI" id="CHEBI:60240"/>
    </cofactor>
</comment>
<comment type="pathway">
    <text evidence="1">Porphyrin-containing compound metabolism; protoporphyrin-IX biosynthesis; protoporphyrinogen-IX from coproporphyrinogen-III (O2 route): step 1/1.</text>
</comment>
<comment type="subunit">
    <text evidence="1">Homodimer.</text>
</comment>
<comment type="subcellular location">
    <subcellularLocation>
        <location evidence="1">Cytoplasm</location>
    </subcellularLocation>
</comment>
<comment type="similarity">
    <text evidence="1">Belongs to the aerobic coproporphyrinogen-III oxidase family.</text>
</comment>
<keyword id="KW-0963">Cytoplasm</keyword>
<keyword id="KW-0350">Heme biosynthesis</keyword>
<keyword id="KW-0479">Metal-binding</keyword>
<keyword id="KW-0560">Oxidoreductase</keyword>
<keyword id="KW-0627">Porphyrin biosynthesis</keyword>